<name>H33_SPISO</name>
<dbReference type="EMBL" id="M17876">
    <property type="protein sequence ID" value="AAA29965.1"/>
    <property type="molecule type" value="mRNA"/>
</dbReference>
<dbReference type="PIR" id="A45941">
    <property type="entry name" value="A45941"/>
</dbReference>
<dbReference type="SMR" id="P84248"/>
<dbReference type="GO" id="GO:0000786">
    <property type="term" value="C:nucleosome"/>
    <property type="evidence" value="ECO:0007669"/>
    <property type="project" value="UniProtKB-KW"/>
</dbReference>
<dbReference type="GO" id="GO:0005634">
    <property type="term" value="C:nucleus"/>
    <property type="evidence" value="ECO:0007669"/>
    <property type="project" value="UniProtKB-SubCell"/>
</dbReference>
<dbReference type="GO" id="GO:0003677">
    <property type="term" value="F:DNA binding"/>
    <property type="evidence" value="ECO:0007669"/>
    <property type="project" value="UniProtKB-KW"/>
</dbReference>
<dbReference type="GO" id="GO:0046982">
    <property type="term" value="F:protein heterodimerization activity"/>
    <property type="evidence" value="ECO:0007669"/>
    <property type="project" value="InterPro"/>
</dbReference>
<dbReference type="GO" id="GO:0030527">
    <property type="term" value="F:structural constituent of chromatin"/>
    <property type="evidence" value="ECO:0007669"/>
    <property type="project" value="InterPro"/>
</dbReference>
<dbReference type="CDD" id="cd22911">
    <property type="entry name" value="HFD_H3"/>
    <property type="match status" value="1"/>
</dbReference>
<dbReference type="FunFam" id="1.10.20.10:FF:000078">
    <property type="entry name" value="Histone H3"/>
    <property type="match status" value="1"/>
</dbReference>
<dbReference type="FunFam" id="1.10.20.10:FF:000044">
    <property type="entry name" value="Histone H3.3"/>
    <property type="match status" value="1"/>
</dbReference>
<dbReference type="Gene3D" id="1.10.20.10">
    <property type="entry name" value="Histone, subunit A"/>
    <property type="match status" value="1"/>
</dbReference>
<dbReference type="InterPro" id="IPR009072">
    <property type="entry name" value="Histone-fold"/>
</dbReference>
<dbReference type="InterPro" id="IPR007125">
    <property type="entry name" value="Histone_H2A/H2B/H3"/>
</dbReference>
<dbReference type="InterPro" id="IPR000164">
    <property type="entry name" value="Histone_H3/CENP-A"/>
</dbReference>
<dbReference type="PANTHER" id="PTHR11426">
    <property type="entry name" value="HISTONE H3"/>
    <property type="match status" value="1"/>
</dbReference>
<dbReference type="Pfam" id="PF00125">
    <property type="entry name" value="Histone"/>
    <property type="match status" value="1"/>
</dbReference>
<dbReference type="PRINTS" id="PR00622">
    <property type="entry name" value="HISTONEH3"/>
</dbReference>
<dbReference type="SMART" id="SM00428">
    <property type="entry name" value="H3"/>
    <property type="match status" value="1"/>
</dbReference>
<dbReference type="SUPFAM" id="SSF47113">
    <property type="entry name" value="Histone-fold"/>
    <property type="match status" value="1"/>
</dbReference>
<dbReference type="PROSITE" id="PS00322">
    <property type="entry name" value="HISTONE_H3_1"/>
    <property type="match status" value="1"/>
</dbReference>
<dbReference type="PROSITE" id="PS00959">
    <property type="entry name" value="HISTONE_H3_2"/>
    <property type="match status" value="1"/>
</dbReference>
<feature type="initiator methionine" description="Removed" evidence="1">
    <location>
        <position position="1"/>
    </location>
</feature>
<feature type="chain" id="PRO_0000221307" description="Histone H3.3">
    <location>
        <begin position="2"/>
        <end position="136"/>
    </location>
</feature>
<feature type="region of interest" description="Disordered" evidence="2">
    <location>
        <begin position="1"/>
        <end position="43"/>
    </location>
</feature>
<feature type="modified residue" description="N6-methylated lysine" evidence="1">
    <location>
        <position position="5"/>
    </location>
</feature>
<feature type="modified residue" description="N6-acetyllysine; alternate" evidence="1">
    <location>
        <position position="10"/>
    </location>
</feature>
<feature type="modified residue" description="N6-methylated lysine; alternate" evidence="1">
    <location>
        <position position="10"/>
    </location>
</feature>
<feature type="modified residue" description="Phosphoserine" evidence="1">
    <location>
        <position position="11"/>
    </location>
</feature>
<feature type="modified residue" description="N6-acetyllysine" evidence="1">
    <location>
        <position position="15"/>
    </location>
</feature>
<feature type="modified residue" description="N6-acetyllysine" evidence="1">
    <location>
        <position position="24"/>
    </location>
</feature>
<feature type="modified residue" description="N6-methylated lysine" evidence="1">
    <location>
        <position position="28"/>
    </location>
</feature>
<feature type="modified residue" description="N6-methylated lysine" evidence="1">
    <location>
        <position position="37"/>
    </location>
</feature>
<feature type="modified residue" description="N6-methylated lysine" evidence="1">
    <location>
        <position position="80"/>
    </location>
</feature>
<accession>P84248</accession>
<accession>P06351</accession>
<accession>P33155</accession>
<accession>Q9V3W4</accession>
<comment type="function">
    <text>Core component of nucleosome. Nucleosomes wrap and compact DNA into chromatin, limiting DNA accessibility to the cellular machineries which require DNA as a template. Histones thereby play a central role in transcription regulation, DNA repair, DNA replication and chromosomal stability. DNA accessibility is regulated via a complex set of post-translational modifications of histones, also called histone code, and nucleosome remodeling.</text>
</comment>
<comment type="subunit">
    <text>The nucleosome is a histone octamer containing two molecules each of H2A, H2B, H3 and H4 assembled in one H3-H4 heterotetramer and two H2A-H2B heterodimers. The octamer wraps approximately 147 bp of DNA.</text>
</comment>
<comment type="subcellular location">
    <subcellularLocation>
        <location evidence="1">Nucleus</location>
    </subcellularLocation>
    <subcellularLocation>
        <location evidence="1">Chromosome</location>
    </subcellularLocation>
</comment>
<comment type="PTM">
    <text evidence="1">Acetylation is generally linked to gene activation.</text>
</comment>
<comment type="PTM">
    <text evidence="1">Methylation at Lys-5 is linked to gene activation. Methylation at Lys-10 is linked to gene repression (By similarity).</text>
</comment>
<comment type="miscellaneous">
    <text>This histone is the predominant form in non-dividing cells.</text>
</comment>
<comment type="similarity">
    <text evidence="3">Belongs to the histone H3 family.</text>
</comment>
<keyword id="KW-0007">Acetylation</keyword>
<keyword id="KW-0158">Chromosome</keyword>
<keyword id="KW-0238">DNA-binding</keyword>
<keyword id="KW-0488">Methylation</keyword>
<keyword id="KW-0544">Nucleosome core</keyword>
<keyword id="KW-0539">Nucleus</keyword>
<keyword id="KW-0597">Phosphoprotein</keyword>
<protein>
    <recommendedName>
        <fullName>Histone H3.3</fullName>
    </recommendedName>
</protein>
<organism>
    <name type="scientific">Spisula solidissima</name>
    <name type="common">Atlantic surf-clam</name>
    <dbReference type="NCBI Taxonomy" id="6584"/>
    <lineage>
        <taxon>Eukaryota</taxon>
        <taxon>Metazoa</taxon>
        <taxon>Spiralia</taxon>
        <taxon>Lophotrochozoa</taxon>
        <taxon>Mollusca</taxon>
        <taxon>Bivalvia</taxon>
        <taxon>Autobranchia</taxon>
        <taxon>Heteroconchia</taxon>
        <taxon>Euheterodonta</taxon>
        <taxon>Imparidentia</taxon>
        <taxon>Neoheterodontei</taxon>
        <taxon>Venerida</taxon>
        <taxon>Mactroidea</taxon>
        <taxon>Mactridae</taxon>
        <taxon>Spisula</taxon>
    </lineage>
</organism>
<reference key="1">
    <citation type="journal article" date="1987" name="Dev. Biol.">
        <title>Three translationally regulated mRNAs are stored in the cytoplasm of clam oocytes.</title>
        <authorList>
            <person name="Swenson K.I."/>
            <person name="Borgese N."/>
            <person name="Pietrini G."/>
            <person name="Ruderman J.V."/>
        </authorList>
    </citation>
    <scope>NUCLEOTIDE SEQUENCE [MRNA]</scope>
</reference>
<sequence length="136" mass="15328">MARTKQTARKSTGGKAPRKQLATKAARKSAPSTGGVKKPHRYRPGTVALREIRRYQKSTELLIRKLPFQRLVREIAQDFKTDLRFQSAAIGALQEASEAYLVGLFEDTNLCAIHAKRVTIMPKDIQLARRIRGERA</sequence>
<evidence type="ECO:0000250" key="1"/>
<evidence type="ECO:0000256" key="2">
    <source>
        <dbReference type="SAM" id="MobiDB-lite"/>
    </source>
</evidence>
<evidence type="ECO:0000305" key="3"/>
<proteinExistence type="evidence at transcript level"/>